<sequence length="282" mass="32021">MQVFENITKMQEWAREQKKQGQSIALVPTMGYLHEGHLALVKEARRQCDKVVVSIFVNPIQFGAGEDFEQYPRDLEQDSALLEKERVDALFSPGIRDMYPGSFQTFVEVYGEITEKMCGASRPGHFKGVTTVVSKLFNICQPDRAYFGQKDAQQLMIVEKMVRELNFPLEIIRVPIVREKDGLAMSSRNVYLSPEERAEALVLYRALKMAEEEIKNGEREIGIIRQKMEEMIKACPRAAIDYIAINNANDLSELQTCAGKVLIALAVKFGKTRLIDNLIVEV</sequence>
<protein>
    <recommendedName>
        <fullName evidence="1">Pantothenate synthetase</fullName>
        <shortName evidence="1">PS</shortName>
        <ecNumber evidence="1">6.3.2.1</ecNumber>
    </recommendedName>
    <alternativeName>
        <fullName evidence="1">Pantoate--beta-alanine ligase</fullName>
    </alternativeName>
    <alternativeName>
        <fullName evidence="1">Pantoate-activating enzyme</fullName>
    </alternativeName>
</protein>
<feature type="chain" id="PRO_0000305565" description="Pantothenate synthetase">
    <location>
        <begin position="1"/>
        <end position="282"/>
    </location>
</feature>
<feature type="active site" description="Proton donor" evidence="1">
    <location>
        <position position="37"/>
    </location>
</feature>
<feature type="binding site" evidence="1">
    <location>
        <begin position="30"/>
        <end position="37"/>
    </location>
    <ligand>
        <name>ATP</name>
        <dbReference type="ChEBI" id="CHEBI:30616"/>
    </ligand>
</feature>
<feature type="binding site" evidence="1">
    <location>
        <position position="61"/>
    </location>
    <ligand>
        <name>(R)-pantoate</name>
        <dbReference type="ChEBI" id="CHEBI:15980"/>
    </ligand>
</feature>
<feature type="binding site" evidence="1">
    <location>
        <position position="61"/>
    </location>
    <ligand>
        <name>beta-alanine</name>
        <dbReference type="ChEBI" id="CHEBI:57966"/>
    </ligand>
</feature>
<feature type="binding site" evidence="1">
    <location>
        <begin position="148"/>
        <end position="151"/>
    </location>
    <ligand>
        <name>ATP</name>
        <dbReference type="ChEBI" id="CHEBI:30616"/>
    </ligand>
</feature>
<feature type="binding site" evidence="1">
    <location>
        <position position="154"/>
    </location>
    <ligand>
        <name>(R)-pantoate</name>
        <dbReference type="ChEBI" id="CHEBI:15980"/>
    </ligand>
</feature>
<feature type="binding site" evidence="1">
    <location>
        <position position="177"/>
    </location>
    <ligand>
        <name>ATP</name>
        <dbReference type="ChEBI" id="CHEBI:30616"/>
    </ligand>
</feature>
<feature type="binding site" evidence="1">
    <location>
        <begin position="185"/>
        <end position="188"/>
    </location>
    <ligand>
        <name>ATP</name>
        <dbReference type="ChEBI" id="CHEBI:30616"/>
    </ligand>
</feature>
<gene>
    <name evidence="1" type="primary">panC</name>
    <name type="ordered locus">Swol_0102</name>
</gene>
<reference key="1">
    <citation type="journal article" date="2010" name="Environ. Microbiol.">
        <title>The genome of Syntrophomonas wolfei: new insights into syntrophic metabolism and biohydrogen production.</title>
        <authorList>
            <person name="Sieber J.R."/>
            <person name="Sims D.R."/>
            <person name="Han C."/>
            <person name="Kim E."/>
            <person name="Lykidis A."/>
            <person name="Lapidus A.L."/>
            <person name="McDonnald E."/>
            <person name="Rohlin L."/>
            <person name="Culley D.E."/>
            <person name="Gunsalus R."/>
            <person name="McInerney M.J."/>
        </authorList>
    </citation>
    <scope>NUCLEOTIDE SEQUENCE [LARGE SCALE GENOMIC DNA]</scope>
    <source>
        <strain>DSM 2245B / Goettingen</strain>
    </source>
</reference>
<dbReference type="EC" id="6.3.2.1" evidence="1"/>
<dbReference type="EMBL" id="CP000448">
    <property type="protein sequence ID" value="ABI67459.1"/>
    <property type="molecule type" value="Genomic_DNA"/>
</dbReference>
<dbReference type="RefSeq" id="WP_011639570.1">
    <property type="nucleotide sequence ID" value="NC_008346.1"/>
</dbReference>
<dbReference type="SMR" id="Q0B0P5"/>
<dbReference type="STRING" id="335541.Swol_0102"/>
<dbReference type="KEGG" id="swo:Swol_0102"/>
<dbReference type="eggNOG" id="COG0414">
    <property type="taxonomic scope" value="Bacteria"/>
</dbReference>
<dbReference type="HOGENOM" id="CLU_047148_0_0_9"/>
<dbReference type="OrthoDB" id="9773087at2"/>
<dbReference type="UniPathway" id="UPA00028">
    <property type="reaction ID" value="UER00005"/>
</dbReference>
<dbReference type="Proteomes" id="UP000001968">
    <property type="component" value="Chromosome"/>
</dbReference>
<dbReference type="GO" id="GO:0005829">
    <property type="term" value="C:cytosol"/>
    <property type="evidence" value="ECO:0007669"/>
    <property type="project" value="TreeGrafter"/>
</dbReference>
<dbReference type="GO" id="GO:0005524">
    <property type="term" value="F:ATP binding"/>
    <property type="evidence" value="ECO:0007669"/>
    <property type="project" value="UniProtKB-KW"/>
</dbReference>
<dbReference type="GO" id="GO:0004592">
    <property type="term" value="F:pantoate-beta-alanine ligase activity"/>
    <property type="evidence" value="ECO:0007669"/>
    <property type="project" value="UniProtKB-UniRule"/>
</dbReference>
<dbReference type="GO" id="GO:0015940">
    <property type="term" value="P:pantothenate biosynthetic process"/>
    <property type="evidence" value="ECO:0007669"/>
    <property type="project" value="UniProtKB-UniRule"/>
</dbReference>
<dbReference type="CDD" id="cd00560">
    <property type="entry name" value="PanC"/>
    <property type="match status" value="1"/>
</dbReference>
<dbReference type="FunFam" id="3.30.1300.10:FF:000001">
    <property type="entry name" value="Pantothenate synthetase"/>
    <property type="match status" value="1"/>
</dbReference>
<dbReference type="FunFam" id="3.40.50.620:FF:000013">
    <property type="entry name" value="Pantothenate synthetase"/>
    <property type="match status" value="1"/>
</dbReference>
<dbReference type="Gene3D" id="3.40.50.620">
    <property type="entry name" value="HUPs"/>
    <property type="match status" value="1"/>
</dbReference>
<dbReference type="Gene3D" id="3.30.1300.10">
    <property type="entry name" value="Pantoate-beta-alanine ligase, C-terminal domain"/>
    <property type="match status" value="1"/>
</dbReference>
<dbReference type="HAMAP" id="MF_00158">
    <property type="entry name" value="PanC"/>
    <property type="match status" value="1"/>
</dbReference>
<dbReference type="InterPro" id="IPR004821">
    <property type="entry name" value="Cyt_trans-like"/>
</dbReference>
<dbReference type="InterPro" id="IPR003721">
    <property type="entry name" value="Pantoate_ligase"/>
</dbReference>
<dbReference type="InterPro" id="IPR042176">
    <property type="entry name" value="Pantoate_ligase_C"/>
</dbReference>
<dbReference type="InterPro" id="IPR014729">
    <property type="entry name" value="Rossmann-like_a/b/a_fold"/>
</dbReference>
<dbReference type="NCBIfam" id="TIGR00125">
    <property type="entry name" value="cyt_tran_rel"/>
    <property type="match status" value="1"/>
</dbReference>
<dbReference type="NCBIfam" id="TIGR00018">
    <property type="entry name" value="panC"/>
    <property type="match status" value="1"/>
</dbReference>
<dbReference type="PANTHER" id="PTHR21299">
    <property type="entry name" value="CYTIDYLATE KINASE/PANTOATE-BETA-ALANINE LIGASE"/>
    <property type="match status" value="1"/>
</dbReference>
<dbReference type="PANTHER" id="PTHR21299:SF1">
    <property type="entry name" value="PANTOATE--BETA-ALANINE LIGASE"/>
    <property type="match status" value="1"/>
</dbReference>
<dbReference type="Pfam" id="PF02569">
    <property type="entry name" value="Pantoate_ligase"/>
    <property type="match status" value="1"/>
</dbReference>
<dbReference type="SUPFAM" id="SSF52374">
    <property type="entry name" value="Nucleotidylyl transferase"/>
    <property type="match status" value="1"/>
</dbReference>
<proteinExistence type="inferred from homology"/>
<accession>Q0B0P5</accession>
<organism>
    <name type="scientific">Syntrophomonas wolfei subsp. wolfei (strain DSM 2245B / Goettingen)</name>
    <dbReference type="NCBI Taxonomy" id="335541"/>
    <lineage>
        <taxon>Bacteria</taxon>
        <taxon>Bacillati</taxon>
        <taxon>Bacillota</taxon>
        <taxon>Clostridia</taxon>
        <taxon>Eubacteriales</taxon>
        <taxon>Syntrophomonadaceae</taxon>
        <taxon>Syntrophomonas</taxon>
    </lineage>
</organism>
<comment type="function">
    <text evidence="1">Catalyzes the condensation of pantoate with beta-alanine in an ATP-dependent reaction via a pantoyl-adenylate intermediate.</text>
</comment>
<comment type="catalytic activity">
    <reaction evidence="1">
        <text>(R)-pantoate + beta-alanine + ATP = (R)-pantothenate + AMP + diphosphate + H(+)</text>
        <dbReference type="Rhea" id="RHEA:10912"/>
        <dbReference type="ChEBI" id="CHEBI:15378"/>
        <dbReference type="ChEBI" id="CHEBI:15980"/>
        <dbReference type="ChEBI" id="CHEBI:29032"/>
        <dbReference type="ChEBI" id="CHEBI:30616"/>
        <dbReference type="ChEBI" id="CHEBI:33019"/>
        <dbReference type="ChEBI" id="CHEBI:57966"/>
        <dbReference type="ChEBI" id="CHEBI:456215"/>
        <dbReference type="EC" id="6.3.2.1"/>
    </reaction>
</comment>
<comment type="pathway">
    <text evidence="1">Cofactor biosynthesis; (R)-pantothenate biosynthesis; (R)-pantothenate from (R)-pantoate and beta-alanine: step 1/1.</text>
</comment>
<comment type="subunit">
    <text evidence="1">Homodimer.</text>
</comment>
<comment type="subcellular location">
    <subcellularLocation>
        <location evidence="1">Cytoplasm</location>
    </subcellularLocation>
</comment>
<comment type="miscellaneous">
    <text evidence="1">The reaction proceeds by a bi uni uni bi ping pong mechanism.</text>
</comment>
<comment type="similarity">
    <text evidence="1">Belongs to the pantothenate synthetase family.</text>
</comment>
<keyword id="KW-0067">ATP-binding</keyword>
<keyword id="KW-0963">Cytoplasm</keyword>
<keyword id="KW-0436">Ligase</keyword>
<keyword id="KW-0547">Nucleotide-binding</keyword>
<keyword id="KW-0566">Pantothenate biosynthesis</keyword>
<keyword id="KW-1185">Reference proteome</keyword>
<evidence type="ECO:0000255" key="1">
    <source>
        <dbReference type="HAMAP-Rule" id="MF_00158"/>
    </source>
</evidence>
<name>PANC_SYNWW</name>